<keyword id="KW-0687">Ribonucleoprotein</keyword>
<keyword id="KW-0689">Ribosomal protein</keyword>
<keyword id="KW-0694">RNA-binding</keyword>
<keyword id="KW-0699">rRNA-binding</keyword>
<gene>
    <name evidence="1" type="primary">rpsQ</name>
    <name type="ordered locus">BWG_3002</name>
</gene>
<organism>
    <name type="scientific">Escherichia coli (strain K12 / MC4100 / BW2952)</name>
    <dbReference type="NCBI Taxonomy" id="595496"/>
    <lineage>
        <taxon>Bacteria</taxon>
        <taxon>Pseudomonadati</taxon>
        <taxon>Pseudomonadota</taxon>
        <taxon>Gammaproteobacteria</taxon>
        <taxon>Enterobacterales</taxon>
        <taxon>Enterobacteriaceae</taxon>
        <taxon>Escherichia</taxon>
    </lineage>
</organism>
<name>RS17_ECOBW</name>
<protein>
    <recommendedName>
        <fullName evidence="1">Small ribosomal subunit protein uS17</fullName>
    </recommendedName>
    <alternativeName>
        <fullName evidence="2">30S ribosomal protein S17</fullName>
    </alternativeName>
</protein>
<comment type="function">
    <text evidence="1">One of the primary rRNA binding proteins, it binds specifically to the 5'-end of 16S ribosomal RNA.</text>
</comment>
<comment type="subunit">
    <text evidence="1">Part of the 30S ribosomal subunit.</text>
</comment>
<comment type="similarity">
    <text evidence="1">Belongs to the universal ribosomal protein uS17 family.</text>
</comment>
<evidence type="ECO:0000255" key="1">
    <source>
        <dbReference type="HAMAP-Rule" id="MF_01345"/>
    </source>
</evidence>
<evidence type="ECO:0000305" key="2"/>
<dbReference type="EMBL" id="CP001396">
    <property type="protein sequence ID" value="ACR61789.1"/>
    <property type="molecule type" value="Genomic_DNA"/>
</dbReference>
<dbReference type="RefSeq" id="WP_000130100.1">
    <property type="nucleotide sequence ID" value="NC_012759.1"/>
</dbReference>
<dbReference type="SMR" id="C4ZUG6"/>
<dbReference type="GeneID" id="93778676"/>
<dbReference type="KEGG" id="ebw:BWG_3002"/>
<dbReference type="HOGENOM" id="CLU_073626_1_1_6"/>
<dbReference type="GO" id="GO:0022627">
    <property type="term" value="C:cytosolic small ribosomal subunit"/>
    <property type="evidence" value="ECO:0007669"/>
    <property type="project" value="TreeGrafter"/>
</dbReference>
<dbReference type="GO" id="GO:0019843">
    <property type="term" value="F:rRNA binding"/>
    <property type="evidence" value="ECO:0007669"/>
    <property type="project" value="UniProtKB-UniRule"/>
</dbReference>
<dbReference type="GO" id="GO:0003735">
    <property type="term" value="F:structural constituent of ribosome"/>
    <property type="evidence" value="ECO:0007669"/>
    <property type="project" value="InterPro"/>
</dbReference>
<dbReference type="GO" id="GO:0006412">
    <property type="term" value="P:translation"/>
    <property type="evidence" value="ECO:0007669"/>
    <property type="project" value="UniProtKB-UniRule"/>
</dbReference>
<dbReference type="CDD" id="cd00364">
    <property type="entry name" value="Ribosomal_uS17"/>
    <property type="match status" value="1"/>
</dbReference>
<dbReference type="FunFam" id="2.40.50.140:FF:000014">
    <property type="entry name" value="30S ribosomal protein S17"/>
    <property type="match status" value="1"/>
</dbReference>
<dbReference type="Gene3D" id="2.40.50.140">
    <property type="entry name" value="Nucleic acid-binding proteins"/>
    <property type="match status" value="1"/>
</dbReference>
<dbReference type="HAMAP" id="MF_01345_B">
    <property type="entry name" value="Ribosomal_uS17_B"/>
    <property type="match status" value="1"/>
</dbReference>
<dbReference type="InterPro" id="IPR012340">
    <property type="entry name" value="NA-bd_OB-fold"/>
</dbReference>
<dbReference type="InterPro" id="IPR000266">
    <property type="entry name" value="Ribosomal_uS17"/>
</dbReference>
<dbReference type="InterPro" id="IPR019984">
    <property type="entry name" value="Ribosomal_uS17_bact/chlr"/>
</dbReference>
<dbReference type="InterPro" id="IPR019979">
    <property type="entry name" value="Ribosomal_uS17_CS"/>
</dbReference>
<dbReference type="NCBIfam" id="NF004123">
    <property type="entry name" value="PRK05610.1"/>
    <property type="match status" value="1"/>
</dbReference>
<dbReference type="NCBIfam" id="TIGR03635">
    <property type="entry name" value="uS17_bact"/>
    <property type="match status" value="1"/>
</dbReference>
<dbReference type="PANTHER" id="PTHR10744">
    <property type="entry name" value="40S RIBOSOMAL PROTEIN S11 FAMILY MEMBER"/>
    <property type="match status" value="1"/>
</dbReference>
<dbReference type="PANTHER" id="PTHR10744:SF1">
    <property type="entry name" value="SMALL RIBOSOMAL SUBUNIT PROTEIN US17M"/>
    <property type="match status" value="1"/>
</dbReference>
<dbReference type="Pfam" id="PF00366">
    <property type="entry name" value="Ribosomal_S17"/>
    <property type="match status" value="1"/>
</dbReference>
<dbReference type="PRINTS" id="PR00973">
    <property type="entry name" value="RIBOSOMALS17"/>
</dbReference>
<dbReference type="SUPFAM" id="SSF50249">
    <property type="entry name" value="Nucleic acid-binding proteins"/>
    <property type="match status" value="1"/>
</dbReference>
<dbReference type="PROSITE" id="PS00056">
    <property type="entry name" value="RIBOSOMAL_S17"/>
    <property type="match status" value="1"/>
</dbReference>
<reference key="1">
    <citation type="journal article" date="2009" name="J. Bacteriol.">
        <title>Genomic sequencing reveals regulatory mutations and recombinational events in the widely used MC4100 lineage of Escherichia coli K-12.</title>
        <authorList>
            <person name="Ferenci T."/>
            <person name="Zhou Z."/>
            <person name="Betteridge T."/>
            <person name="Ren Y."/>
            <person name="Liu Y."/>
            <person name="Feng L."/>
            <person name="Reeves P.R."/>
            <person name="Wang L."/>
        </authorList>
    </citation>
    <scope>NUCLEOTIDE SEQUENCE [LARGE SCALE GENOMIC DNA]</scope>
    <source>
        <strain>K12 / MC4100 / BW2952</strain>
    </source>
</reference>
<sequence>MTDKIRTLQGRVVSDKMEKSIVVAIERFVKHPIYGKFIKRTTKLHVHDENNECGIGDVVEIRECRPLSKTKSWTLVRVVEKAVL</sequence>
<feature type="chain" id="PRO_1000214781" description="Small ribosomal subunit protein uS17">
    <location>
        <begin position="1"/>
        <end position="84"/>
    </location>
</feature>
<accession>C4ZUG6</accession>
<proteinExistence type="inferred from homology"/>